<sequence length="164" mass="19103">MYIEMIDETNQVSEEIKNQTLDILEFAAQKTGKEDKEMAVTFVTNERSHELNLKYRDTNRPTDVISLEYKPESSLSFDEEDLADDPDLAEVLTEFDAYIGELFISVDKAREQAQEYGHSFEREMGFLAVHGFLHINGYDHYTPQEEKEMFSLQEEILDAYGLKR</sequence>
<keyword id="KW-0963">Cytoplasm</keyword>
<keyword id="KW-0255">Endonuclease</keyword>
<keyword id="KW-0378">Hydrolase</keyword>
<keyword id="KW-0479">Metal-binding</keyword>
<keyword id="KW-0540">Nuclease</keyword>
<keyword id="KW-1185">Reference proteome</keyword>
<keyword id="KW-0690">Ribosome biogenesis</keyword>
<keyword id="KW-0698">rRNA processing</keyword>
<keyword id="KW-0862">Zinc</keyword>
<name>YBEY_STRMU</name>
<evidence type="ECO:0000255" key="1">
    <source>
        <dbReference type="HAMAP-Rule" id="MF_00009"/>
    </source>
</evidence>
<evidence type="ECO:0000305" key="2"/>
<proteinExistence type="inferred from homology"/>
<gene>
    <name evidence="1" type="primary">ybeY</name>
    <name type="ordered locus">SMU_1619c</name>
</gene>
<dbReference type="EC" id="3.1.-.-" evidence="1"/>
<dbReference type="EMBL" id="AF000954">
    <property type="protein sequence ID" value="AAC38046.1"/>
    <property type="molecule type" value="Genomic_DNA"/>
</dbReference>
<dbReference type="EMBL" id="AE014133">
    <property type="protein sequence ID" value="AAN59260.1"/>
    <property type="molecule type" value="Genomic_DNA"/>
</dbReference>
<dbReference type="PIR" id="C36933">
    <property type="entry name" value="C36933"/>
</dbReference>
<dbReference type="RefSeq" id="NP_721954.1">
    <property type="nucleotide sequence ID" value="NC_004350.2"/>
</dbReference>
<dbReference type="RefSeq" id="WP_002262771.1">
    <property type="nucleotide sequence ID" value="NC_004350.2"/>
</dbReference>
<dbReference type="SMR" id="Q8DSY7"/>
<dbReference type="STRING" id="210007.SMU_1619c"/>
<dbReference type="KEGG" id="smu:SMU_1619c"/>
<dbReference type="PATRIC" id="fig|210007.7.peg.1442"/>
<dbReference type="eggNOG" id="COG0319">
    <property type="taxonomic scope" value="Bacteria"/>
</dbReference>
<dbReference type="HOGENOM" id="CLU_106710_3_0_9"/>
<dbReference type="OrthoDB" id="9807740at2"/>
<dbReference type="PhylomeDB" id="Q8DSY7"/>
<dbReference type="Proteomes" id="UP000002512">
    <property type="component" value="Chromosome"/>
</dbReference>
<dbReference type="GO" id="GO:0005737">
    <property type="term" value="C:cytoplasm"/>
    <property type="evidence" value="ECO:0007669"/>
    <property type="project" value="UniProtKB-SubCell"/>
</dbReference>
<dbReference type="GO" id="GO:0004222">
    <property type="term" value="F:metalloendopeptidase activity"/>
    <property type="evidence" value="ECO:0007669"/>
    <property type="project" value="InterPro"/>
</dbReference>
<dbReference type="GO" id="GO:0004521">
    <property type="term" value="F:RNA endonuclease activity"/>
    <property type="evidence" value="ECO:0007669"/>
    <property type="project" value="UniProtKB-UniRule"/>
</dbReference>
<dbReference type="GO" id="GO:0008270">
    <property type="term" value="F:zinc ion binding"/>
    <property type="evidence" value="ECO:0007669"/>
    <property type="project" value="UniProtKB-UniRule"/>
</dbReference>
<dbReference type="GO" id="GO:0006364">
    <property type="term" value="P:rRNA processing"/>
    <property type="evidence" value="ECO:0007669"/>
    <property type="project" value="UniProtKB-UniRule"/>
</dbReference>
<dbReference type="Gene3D" id="3.40.390.30">
    <property type="entry name" value="Metalloproteases ('zincins'), catalytic domain"/>
    <property type="match status" value="1"/>
</dbReference>
<dbReference type="HAMAP" id="MF_00009">
    <property type="entry name" value="Endoribonucl_YbeY"/>
    <property type="match status" value="1"/>
</dbReference>
<dbReference type="InterPro" id="IPR023091">
    <property type="entry name" value="MetalPrtase_cat_dom_sf_prd"/>
</dbReference>
<dbReference type="InterPro" id="IPR002036">
    <property type="entry name" value="YbeY"/>
</dbReference>
<dbReference type="InterPro" id="IPR020549">
    <property type="entry name" value="YbeY_CS"/>
</dbReference>
<dbReference type="NCBIfam" id="TIGR00043">
    <property type="entry name" value="rRNA maturation RNase YbeY"/>
    <property type="match status" value="1"/>
</dbReference>
<dbReference type="PANTHER" id="PTHR46986">
    <property type="entry name" value="ENDORIBONUCLEASE YBEY, CHLOROPLASTIC"/>
    <property type="match status" value="1"/>
</dbReference>
<dbReference type="PANTHER" id="PTHR46986:SF1">
    <property type="entry name" value="ENDORIBONUCLEASE YBEY, CHLOROPLASTIC"/>
    <property type="match status" value="1"/>
</dbReference>
<dbReference type="Pfam" id="PF02130">
    <property type="entry name" value="YbeY"/>
    <property type="match status" value="1"/>
</dbReference>
<dbReference type="SUPFAM" id="SSF55486">
    <property type="entry name" value="Metalloproteases ('zincins'), catalytic domain"/>
    <property type="match status" value="1"/>
</dbReference>
<dbReference type="PROSITE" id="PS01306">
    <property type="entry name" value="UPF0054"/>
    <property type="match status" value="1"/>
</dbReference>
<accession>Q8DSY7</accession>
<accession>O51806</accession>
<organism>
    <name type="scientific">Streptococcus mutans serotype c (strain ATCC 700610 / UA159)</name>
    <dbReference type="NCBI Taxonomy" id="210007"/>
    <lineage>
        <taxon>Bacteria</taxon>
        <taxon>Bacillati</taxon>
        <taxon>Bacillota</taxon>
        <taxon>Bacilli</taxon>
        <taxon>Lactobacillales</taxon>
        <taxon>Streptococcaceae</taxon>
        <taxon>Streptococcus</taxon>
    </lineage>
</organism>
<protein>
    <recommendedName>
        <fullName evidence="1">Endoribonuclease YbeY</fullName>
        <ecNumber evidence="1">3.1.-.-</ecNumber>
    </recommendedName>
</protein>
<reference key="1">
    <citation type="journal article" date="1998" name="J. Bacteriol.">
        <title>Diacylglycerol kinase is involved in regulation of expression of the lantibiotic mutacin II of Streptococcus mutans.</title>
        <authorList>
            <person name="Chen P."/>
            <person name="Novak J."/>
            <person name="Qi F.-Q."/>
            <person name="Caufield P.W."/>
        </authorList>
    </citation>
    <scope>NUCLEOTIDE SEQUENCE [GENOMIC DNA]</scope>
    <source>
        <strain>T8</strain>
    </source>
</reference>
<reference key="2">
    <citation type="journal article" date="2002" name="Proc. Natl. Acad. Sci. U.S.A.">
        <title>Genome sequence of Streptococcus mutans UA159, a cariogenic dental pathogen.</title>
        <authorList>
            <person name="Ajdic D.J."/>
            <person name="McShan W.M."/>
            <person name="McLaughlin R.E."/>
            <person name="Savic G."/>
            <person name="Chang J."/>
            <person name="Carson M.B."/>
            <person name="Primeaux C."/>
            <person name="Tian R."/>
            <person name="Kenton S."/>
            <person name="Jia H.G."/>
            <person name="Lin S.P."/>
            <person name="Qian Y."/>
            <person name="Li S."/>
            <person name="Zhu H."/>
            <person name="Najar F.Z."/>
            <person name="Lai H."/>
            <person name="White J."/>
            <person name="Roe B.A."/>
            <person name="Ferretti J.J."/>
        </authorList>
    </citation>
    <scope>NUCLEOTIDE SEQUENCE [LARGE SCALE GENOMIC DNA]</scope>
    <source>
        <strain>ATCC 700610 / UA159</strain>
    </source>
</reference>
<feature type="chain" id="PRO_0000102539" description="Endoribonuclease YbeY">
    <location>
        <begin position="1"/>
        <end position="164"/>
    </location>
</feature>
<feature type="binding site" evidence="1">
    <location>
        <position position="130"/>
    </location>
    <ligand>
        <name>Zn(2+)</name>
        <dbReference type="ChEBI" id="CHEBI:29105"/>
        <note>catalytic</note>
    </ligand>
</feature>
<feature type="binding site" evidence="1">
    <location>
        <position position="134"/>
    </location>
    <ligand>
        <name>Zn(2+)</name>
        <dbReference type="ChEBI" id="CHEBI:29105"/>
        <note>catalytic</note>
    </ligand>
</feature>
<feature type="binding site" evidence="1">
    <location>
        <position position="140"/>
    </location>
    <ligand>
        <name>Zn(2+)</name>
        <dbReference type="ChEBI" id="CHEBI:29105"/>
        <note>catalytic</note>
    </ligand>
</feature>
<feature type="sequence conflict" description="In Ref. 1; AAC38046." evidence="2" ref="1">
    <original>E</original>
    <variation>G</variation>
    <location>
        <position position="15"/>
    </location>
</feature>
<comment type="function">
    <text evidence="1">Single strand-specific metallo-endoribonuclease involved in late-stage 70S ribosome quality control and in maturation of the 3' terminus of the 16S rRNA.</text>
</comment>
<comment type="cofactor">
    <cofactor evidence="1">
        <name>Zn(2+)</name>
        <dbReference type="ChEBI" id="CHEBI:29105"/>
    </cofactor>
    <text evidence="1">Binds 1 zinc ion.</text>
</comment>
<comment type="subcellular location">
    <subcellularLocation>
        <location evidence="1">Cytoplasm</location>
    </subcellularLocation>
</comment>
<comment type="similarity">
    <text evidence="1">Belongs to the endoribonuclease YbeY family.</text>
</comment>